<accession>C1CDC3</accession>
<name>RS16_STRZJ</name>
<reference key="1">
    <citation type="journal article" date="2010" name="Genome Biol.">
        <title>Structure and dynamics of the pan-genome of Streptococcus pneumoniae and closely related species.</title>
        <authorList>
            <person name="Donati C."/>
            <person name="Hiller N.L."/>
            <person name="Tettelin H."/>
            <person name="Muzzi A."/>
            <person name="Croucher N.J."/>
            <person name="Angiuoli S.V."/>
            <person name="Oggioni M."/>
            <person name="Dunning Hotopp J.C."/>
            <person name="Hu F.Z."/>
            <person name="Riley D.R."/>
            <person name="Covacci A."/>
            <person name="Mitchell T.J."/>
            <person name="Bentley S.D."/>
            <person name="Kilian M."/>
            <person name="Ehrlich G.D."/>
            <person name="Rappuoli R."/>
            <person name="Moxon E.R."/>
            <person name="Masignani V."/>
        </authorList>
    </citation>
    <scope>NUCLEOTIDE SEQUENCE [LARGE SCALE GENOMIC DNA]</scope>
    <source>
        <strain>JJA</strain>
    </source>
</reference>
<proteinExistence type="inferred from homology"/>
<comment type="similarity">
    <text evidence="1">Belongs to the bacterial ribosomal protein bS16 family.</text>
</comment>
<dbReference type="EMBL" id="CP000919">
    <property type="protein sequence ID" value="ACO19161.1"/>
    <property type="molecule type" value="Genomic_DNA"/>
</dbReference>
<dbReference type="RefSeq" id="WP_000268761.1">
    <property type="nucleotide sequence ID" value="NC_012466.1"/>
</dbReference>
<dbReference type="SMR" id="C1CDC3"/>
<dbReference type="GeneID" id="45653854"/>
<dbReference type="KEGG" id="sjj:SPJ_0712"/>
<dbReference type="HOGENOM" id="CLU_100590_5_0_9"/>
<dbReference type="Proteomes" id="UP000002206">
    <property type="component" value="Chromosome"/>
</dbReference>
<dbReference type="GO" id="GO:0005737">
    <property type="term" value="C:cytoplasm"/>
    <property type="evidence" value="ECO:0007669"/>
    <property type="project" value="UniProtKB-ARBA"/>
</dbReference>
<dbReference type="GO" id="GO:0015935">
    <property type="term" value="C:small ribosomal subunit"/>
    <property type="evidence" value="ECO:0007669"/>
    <property type="project" value="TreeGrafter"/>
</dbReference>
<dbReference type="GO" id="GO:0003735">
    <property type="term" value="F:structural constituent of ribosome"/>
    <property type="evidence" value="ECO:0007669"/>
    <property type="project" value="InterPro"/>
</dbReference>
<dbReference type="GO" id="GO:0006412">
    <property type="term" value="P:translation"/>
    <property type="evidence" value="ECO:0007669"/>
    <property type="project" value="UniProtKB-UniRule"/>
</dbReference>
<dbReference type="FunFam" id="3.30.1320.10:FF:000002">
    <property type="entry name" value="30S ribosomal protein S16"/>
    <property type="match status" value="1"/>
</dbReference>
<dbReference type="Gene3D" id="3.30.1320.10">
    <property type="match status" value="1"/>
</dbReference>
<dbReference type="HAMAP" id="MF_00385">
    <property type="entry name" value="Ribosomal_bS16"/>
    <property type="match status" value="1"/>
</dbReference>
<dbReference type="InterPro" id="IPR000307">
    <property type="entry name" value="Ribosomal_bS16"/>
</dbReference>
<dbReference type="InterPro" id="IPR023803">
    <property type="entry name" value="Ribosomal_bS16_dom_sf"/>
</dbReference>
<dbReference type="NCBIfam" id="TIGR00002">
    <property type="entry name" value="S16"/>
    <property type="match status" value="1"/>
</dbReference>
<dbReference type="PANTHER" id="PTHR12919">
    <property type="entry name" value="30S RIBOSOMAL PROTEIN S16"/>
    <property type="match status" value="1"/>
</dbReference>
<dbReference type="PANTHER" id="PTHR12919:SF20">
    <property type="entry name" value="SMALL RIBOSOMAL SUBUNIT PROTEIN BS16M"/>
    <property type="match status" value="1"/>
</dbReference>
<dbReference type="Pfam" id="PF00886">
    <property type="entry name" value="Ribosomal_S16"/>
    <property type="match status" value="1"/>
</dbReference>
<dbReference type="SUPFAM" id="SSF54565">
    <property type="entry name" value="Ribosomal protein S16"/>
    <property type="match status" value="1"/>
</dbReference>
<feature type="chain" id="PRO_1000134328" description="Small ribosomal subunit protein bS16">
    <location>
        <begin position="1"/>
        <end position="90"/>
    </location>
</feature>
<sequence>MAVKIRLTRMGSKKKPFYRINVADSRSPRDGRFIETVGTYNPLVAENQVTLKEDRVLAWLANGAQPSDTVRNILSKEGVLKKFHDSKFSK</sequence>
<evidence type="ECO:0000255" key="1">
    <source>
        <dbReference type="HAMAP-Rule" id="MF_00385"/>
    </source>
</evidence>
<evidence type="ECO:0000305" key="2"/>
<protein>
    <recommendedName>
        <fullName evidence="1">Small ribosomal subunit protein bS16</fullName>
    </recommendedName>
    <alternativeName>
        <fullName evidence="2">30S ribosomal protein S16</fullName>
    </alternativeName>
</protein>
<gene>
    <name evidence="1" type="primary">rpsP</name>
    <name type="ordered locus">SPJ_0712</name>
</gene>
<organism>
    <name type="scientific">Streptococcus pneumoniae (strain JJA)</name>
    <dbReference type="NCBI Taxonomy" id="488222"/>
    <lineage>
        <taxon>Bacteria</taxon>
        <taxon>Bacillati</taxon>
        <taxon>Bacillota</taxon>
        <taxon>Bacilli</taxon>
        <taxon>Lactobacillales</taxon>
        <taxon>Streptococcaceae</taxon>
        <taxon>Streptococcus</taxon>
    </lineage>
</organism>
<keyword id="KW-0687">Ribonucleoprotein</keyword>
<keyword id="KW-0689">Ribosomal protein</keyword>